<sequence length="777" mass="86396">MSSKQAASPFTCKAEGEEEMTGDLASREMNECKDQIMASHLPLHPLNHNKPHSEELQSLVTTLPADLDWDSMISSQHRMDSESNKLRSLYSFRTSSTSPHKPDEGARERSDLMSSVNFGTPERRKGSLADVVDSLKQKKLEEMTRSEQEDSTCVEKILSKDWKDKMDRLNTSELLGEIKGTPESLAEKERQLSTMITQLISLREQLLAAHDEQKKLAASQIEKQRQQMDLARQQQEQIARQQQQLLQQQHKINILQQQIQVQGHMPPLMIPIFPHDQRTLAAAAAAQQGFLFPPGLSYKPGDNYPMQFIPSTMAAAAASGLSPLQLQQLYAAQLASMQVSPGAKIPTTPQPANAPGTLSPTGMKSEKRGTSPVAQIKDEAAQPLNLSARPKTADPIKSPTSPTQSFFPMSKTSPVSLSNKSGIPSPIRGPSLDILSSLNSPALFGDQDTVMKAIQEARKMREQIQREQLLTPHSIDGKLPINNMGLNNCRSDKMLLDAVTGKICIRSAHTERTHFENLGPQLTGKPNEDGKLGPGVIDLTRPEDVEGGATVVEARVYRDTRGRSSSEPHIKRPMNAFMVWAKDERRKILQAFPDMHNSNISKILGSRWKAMSNQEKQPYYEEQARLSKIHLEKYPNYKYKPRPKRTCIVDGKKLRIGEYKQLMRSRRQEMRQFFTVGQQPQIPISTPTGVVYPGTISMATTTPSPQMTSDCSSTSASPEPSIPVIQSTYGMKLDSGSLGGNDLMNGEDEMEMYDDFEDDPKSDYSSDNEANEAVSAN</sequence>
<comment type="function">
    <text evidence="2">Transcription factor that plays a key role in several developmental processes, including neurogenesis, chondrocytes differentiation and cartilage formation. Specifically binds the 5'-AACAAT-3' DNA motif present in enhancers and super-enhancers and promotes expression of genes important for chondrogenesis. Required for overt chondrogenesis when condensed prechondrocytes differentiate into early stage chondrocytes: sox5 and sox6 cooperatively bind with sox9 on active enhancers and super-enhancers associated with cartilage-specific genes, and thereby potentiate sox9's ability to transactivate. Not involved in precartilaginous condensation, the first step in chondrogenesis, during which skeletal progenitors differentiate into prechondrocytes. Binds to the proximal promoter region of the myelin protein MPZ gene, and is thereby involved in the differentiation of oligodendroglia in the developing spinal tube.</text>
</comment>
<comment type="subcellular location">
    <subcellularLocation>
        <location evidence="1 3">Nucleus</location>
    </subcellularLocation>
</comment>
<protein>
    <recommendedName>
        <fullName evidence="5">Transcription factor Sox-6</fullName>
    </recommendedName>
</protein>
<feature type="chain" id="PRO_0000378067" description="Transcription factor Sox-6">
    <location>
        <begin position="1"/>
        <end position="777"/>
    </location>
</feature>
<feature type="DNA-binding region" description="HMG box" evidence="3">
    <location>
        <begin position="570"/>
        <end position="638"/>
    </location>
</feature>
<feature type="region of interest" description="Disordered" evidence="4">
    <location>
        <begin position="1"/>
        <end position="33"/>
    </location>
</feature>
<feature type="region of interest" description="Disordered" evidence="4">
    <location>
        <begin position="92"/>
        <end position="127"/>
    </location>
</feature>
<feature type="region of interest" description="Disordered" evidence="4">
    <location>
        <begin position="342"/>
        <end position="424"/>
    </location>
</feature>
<feature type="region of interest" description="Disordered" evidence="4">
    <location>
        <begin position="701"/>
        <end position="777"/>
    </location>
</feature>
<feature type="compositionally biased region" description="Basic and acidic residues" evidence="4">
    <location>
        <begin position="100"/>
        <end position="111"/>
    </location>
</feature>
<feature type="compositionally biased region" description="Polar residues" evidence="4">
    <location>
        <begin position="398"/>
        <end position="422"/>
    </location>
</feature>
<feature type="compositionally biased region" description="Polar residues" evidence="4">
    <location>
        <begin position="701"/>
        <end position="729"/>
    </location>
</feature>
<feature type="compositionally biased region" description="Acidic residues" evidence="4">
    <location>
        <begin position="745"/>
        <end position="758"/>
    </location>
</feature>
<feature type="compositionally biased region" description="Polar residues" evidence="4">
    <location>
        <begin position="765"/>
        <end position="777"/>
    </location>
</feature>
<proteinExistence type="evidence at transcript level"/>
<organism>
    <name type="scientific">Xenopus tropicalis</name>
    <name type="common">Western clawed frog</name>
    <name type="synonym">Silurana tropicalis</name>
    <dbReference type="NCBI Taxonomy" id="8364"/>
    <lineage>
        <taxon>Eukaryota</taxon>
        <taxon>Metazoa</taxon>
        <taxon>Chordata</taxon>
        <taxon>Craniata</taxon>
        <taxon>Vertebrata</taxon>
        <taxon>Euteleostomi</taxon>
        <taxon>Amphibia</taxon>
        <taxon>Batrachia</taxon>
        <taxon>Anura</taxon>
        <taxon>Pipoidea</taxon>
        <taxon>Pipidae</taxon>
        <taxon>Xenopodinae</taxon>
        <taxon>Xenopus</taxon>
        <taxon>Silurana</taxon>
    </lineage>
</organism>
<dbReference type="EMBL" id="BC161247">
    <property type="protein sequence ID" value="AAI61247.1"/>
    <property type="molecule type" value="mRNA"/>
</dbReference>
<dbReference type="RefSeq" id="NP_001116887.1">
    <property type="nucleotide sequence ID" value="NM_001123415.1"/>
</dbReference>
<dbReference type="SMR" id="B1H349"/>
<dbReference type="FunCoup" id="B1H349">
    <property type="interactions" value="2924"/>
</dbReference>
<dbReference type="STRING" id="8364.ENSXETP00000023758"/>
<dbReference type="PaxDb" id="8364-ENSXETP00000035030"/>
<dbReference type="GeneID" id="100144640"/>
<dbReference type="KEGG" id="xtr:100144640"/>
<dbReference type="AGR" id="Xenbase:XB-GENE-483934"/>
<dbReference type="CTD" id="55553"/>
<dbReference type="Xenbase" id="XB-GENE-483934">
    <property type="gene designation" value="sox6"/>
</dbReference>
<dbReference type="eggNOG" id="KOG0528">
    <property type="taxonomic scope" value="Eukaryota"/>
</dbReference>
<dbReference type="InParanoid" id="B1H349"/>
<dbReference type="OrthoDB" id="6247875at2759"/>
<dbReference type="Reactome" id="R-XTR-3769402">
    <property type="pathway name" value="Deactivation of the beta-catenin transactivating complex"/>
</dbReference>
<dbReference type="Proteomes" id="UP000008143">
    <property type="component" value="Chromosome 4"/>
</dbReference>
<dbReference type="GO" id="GO:0005634">
    <property type="term" value="C:nucleus"/>
    <property type="evidence" value="ECO:0007669"/>
    <property type="project" value="UniProtKB-SubCell"/>
</dbReference>
<dbReference type="GO" id="GO:0003677">
    <property type="term" value="F:DNA binding"/>
    <property type="evidence" value="ECO:0000250"/>
    <property type="project" value="UniProtKB"/>
</dbReference>
<dbReference type="GO" id="GO:0001502">
    <property type="term" value="P:cartilage condensation"/>
    <property type="evidence" value="ECO:0000250"/>
    <property type="project" value="UniProtKB"/>
</dbReference>
<dbReference type="GO" id="GO:0051216">
    <property type="term" value="P:cartilage development"/>
    <property type="evidence" value="ECO:0000250"/>
    <property type="project" value="UniProtKB"/>
</dbReference>
<dbReference type="GO" id="GO:0002062">
    <property type="term" value="P:chondrocyte differentiation"/>
    <property type="evidence" value="ECO:0000250"/>
    <property type="project" value="UniProtKB"/>
</dbReference>
<dbReference type="CDD" id="cd22042">
    <property type="entry name" value="HMG-box_EGL13-like"/>
    <property type="match status" value="1"/>
</dbReference>
<dbReference type="FunFam" id="1.10.30.10:FF:000003">
    <property type="entry name" value="Putative transcription factor SOX-6"/>
    <property type="match status" value="1"/>
</dbReference>
<dbReference type="Gene3D" id="1.10.30.10">
    <property type="entry name" value="High mobility group box domain"/>
    <property type="match status" value="1"/>
</dbReference>
<dbReference type="InterPro" id="IPR009071">
    <property type="entry name" value="HMG_box_dom"/>
</dbReference>
<dbReference type="InterPro" id="IPR036910">
    <property type="entry name" value="HMG_box_dom_sf"/>
</dbReference>
<dbReference type="InterPro" id="IPR051356">
    <property type="entry name" value="SOX/SOX-like_TF"/>
</dbReference>
<dbReference type="PANTHER" id="PTHR45789">
    <property type="entry name" value="FI18025P1"/>
    <property type="match status" value="1"/>
</dbReference>
<dbReference type="PANTHER" id="PTHR45789:SF1">
    <property type="entry name" value="TRANSCRIPTION FACTOR SOX-6"/>
    <property type="match status" value="1"/>
</dbReference>
<dbReference type="Pfam" id="PF00505">
    <property type="entry name" value="HMG_box"/>
    <property type="match status" value="1"/>
</dbReference>
<dbReference type="SMART" id="SM00398">
    <property type="entry name" value="HMG"/>
    <property type="match status" value="1"/>
</dbReference>
<dbReference type="SUPFAM" id="SSF47095">
    <property type="entry name" value="HMG-box"/>
    <property type="match status" value="1"/>
</dbReference>
<dbReference type="PROSITE" id="PS50118">
    <property type="entry name" value="HMG_BOX_2"/>
    <property type="match status" value="1"/>
</dbReference>
<gene>
    <name evidence="1" type="primary">sox6</name>
</gene>
<keyword id="KW-0010">Activator</keyword>
<keyword id="KW-0217">Developmental protein</keyword>
<keyword id="KW-0221">Differentiation</keyword>
<keyword id="KW-0238">DNA-binding</keyword>
<keyword id="KW-1017">Isopeptide bond</keyword>
<keyword id="KW-0539">Nucleus</keyword>
<keyword id="KW-1185">Reference proteome</keyword>
<keyword id="KW-0804">Transcription</keyword>
<keyword id="KW-0805">Transcription regulation</keyword>
<evidence type="ECO:0000250" key="1">
    <source>
        <dbReference type="UniProtKB" id="P35712"/>
    </source>
</evidence>
<evidence type="ECO:0000250" key="2">
    <source>
        <dbReference type="UniProtKB" id="P40645"/>
    </source>
</evidence>
<evidence type="ECO:0000255" key="3">
    <source>
        <dbReference type="PROSITE-ProRule" id="PRU00267"/>
    </source>
</evidence>
<evidence type="ECO:0000256" key="4">
    <source>
        <dbReference type="SAM" id="MobiDB-lite"/>
    </source>
</evidence>
<evidence type="ECO:0000305" key="5"/>
<evidence type="ECO:0000312" key="6">
    <source>
        <dbReference type="EMBL" id="AAI61247.1"/>
    </source>
</evidence>
<reference evidence="6" key="1">
    <citation type="submission" date="2008-03" db="EMBL/GenBank/DDBJ databases">
        <authorList>
            <consortium name="NIH - Xenopus Gene Collection (XGC) project"/>
        </authorList>
    </citation>
    <scope>NUCLEOTIDE SEQUENCE [LARGE SCALE MRNA]</scope>
    <source>
        <strain evidence="6">TGA IC</strain>
        <tissue evidence="6">Bone</tissue>
    </source>
</reference>
<accession>B1H349</accession>
<name>SOX6_XENTR</name>